<organism>
    <name type="scientific">Bos taurus</name>
    <name type="common">Bovine</name>
    <dbReference type="NCBI Taxonomy" id="9913"/>
    <lineage>
        <taxon>Eukaryota</taxon>
        <taxon>Metazoa</taxon>
        <taxon>Chordata</taxon>
        <taxon>Craniata</taxon>
        <taxon>Vertebrata</taxon>
        <taxon>Euteleostomi</taxon>
        <taxon>Mammalia</taxon>
        <taxon>Eutheria</taxon>
        <taxon>Laurasiatheria</taxon>
        <taxon>Artiodactyla</taxon>
        <taxon>Ruminantia</taxon>
        <taxon>Pecora</taxon>
        <taxon>Bovidae</taxon>
        <taxon>Bovinae</taxon>
        <taxon>Bos</taxon>
    </lineage>
</organism>
<sequence length="478" mass="53627">MSIRVTQKSYKVSTSAPRSFSSRSYTSGPGSRISSSAFSRVGSSSSFRGGLGTGMSMAGSYGGAPGLGGITAVTVNQSLLSPLKLEVDPNIQAVRTQEKEQIKTLNNKFASFIDKVRHLEQQNKVLETKWNLLQQQKTARSNIDNMFESYINNLRRQLETLAQEKLKLEVELGNMQGLVEDFKTKYEDEIQKRTDMENEFVIIKKDVDEAYMNKVELESRLEGLTDEINFYRQLYEEEIREMQSQISDTSVVLEMDNNRNLDLDGIIAEVKAQYEEIANRSRAEAEAMYQIKYEELQTLAGKHGDDLRRTKTEISEMNRNINRLQAEIEGLKGQRASLEAAIADAEQRGEMAVKDAQAKLAELEAALRNAKQDMARQLREYQELMNVKLALDVEIATYRKLLEGEESRLESGMQNMSIHTKTTSGYAGGLTSSYGTPGFNYSLSPGSFSRTSSKPVVVKKIETRDGKLVSESSDVLSK</sequence>
<evidence type="ECO:0000250" key="1"/>
<evidence type="ECO:0000250" key="2">
    <source>
        <dbReference type="UniProtKB" id="P05787"/>
    </source>
</evidence>
<evidence type="ECO:0000250" key="3">
    <source>
        <dbReference type="UniProtKB" id="P11679"/>
    </source>
</evidence>
<evidence type="ECO:0000250" key="4">
    <source>
        <dbReference type="UniProtKB" id="Q10758"/>
    </source>
</evidence>
<evidence type="ECO:0000255" key="5">
    <source>
        <dbReference type="PROSITE-ProRule" id="PRU01188"/>
    </source>
</evidence>
<evidence type="ECO:0000256" key="6">
    <source>
        <dbReference type="SAM" id="MobiDB-lite"/>
    </source>
</evidence>
<evidence type="ECO:0000269" key="7">
    <source>
    </source>
</evidence>
<evidence type="ECO:0000305" key="8"/>
<feature type="chain" id="PRO_0000063739" description="Keratin, type II cytoskeletal 8">
    <location>
        <begin position="1"/>
        <end position="478"/>
    </location>
</feature>
<feature type="domain" description="IF rod" evidence="5">
    <location>
        <begin position="98"/>
        <end position="409"/>
    </location>
</feature>
<feature type="region of interest" description="Head">
    <location>
        <begin position="1"/>
        <end position="97"/>
    </location>
</feature>
<feature type="region of interest" description="Disordered" evidence="6">
    <location>
        <begin position="16"/>
        <end position="44"/>
    </location>
</feature>
<feature type="region of interest" description="Coil 1A">
    <location>
        <begin position="98"/>
        <end position="133"/>
    </location>
</feature>
<feature type="region of interest" description="Linker 1">
    <location>
        <begin position="134"/>
        <end position="150"/>
    </location>
</feature>
<feature type="region of interest" description="Coil 1B">
    <location>
        <begin position="151"/>
        <end position="242"/>
    </location>
</feature>
<feature type="region of interest" description="Linker 12">
    <location>
        <begin position="243"/>
        <end position="266"/>
    </location>
</feature>
<feature type="region of interest" description="Coil 2">
    <location>
        <begin position="267"/>
        <end position="405"/>
    </location>
</feature>
<feature type="region of interest" description="Necessary for interaction with PNN" evidence="1">
    <location>
        <begin position="268"/>
        <end position="389"/>
    </location>
</feature>
<feature type="region of interest" description="Tail">
    <location>
        <begin position="406"/>
        <end position="478"/>
    </location>
</feature>
<feature type="site" description="Stutter">
    <location>
        <position position="349"/>
    </location>
</feature>
<feature type="modified residue" description="Phosphoserine; by PKC/PRKCE" evidence="2">
    <location>
        <position position="9"/>
    </location>
</feature>
<feature type="modified residue" description="Phosphoserine" evidence="2">
    <location>
        <position position="13"/>
    </location>
</feature>
<feature type="modified residue" description="Phosphoserine" evidence="2">
    <location>
        <position position="15"/>
    </location>
</feature>
<feature type="modified residue" description="Phosphoserine" evidence="2">
    <location>
        <position position="21"/>
    </location>
</feature>
<feature type="modified residue" description="Phosphoserine" evidence="2">
    <location>
        <position position="22"/>
    </location>
</feature>
<feature type="modified residue" description="Omega-N-methylarginine" evidence="2">
    <location>
        <position position="23"/>
    </location>
</feature>
<feature type="modified residue" description="Phosphoserine; by PKC/PRKCE" evidence="2">
    <location>
        <position position="24"/>
    </location>
</feature>
<feature type="modified residue" description="Phosphothreonine" evidence="4">
    <location>
        <position position="26"/>
    </location>
</feature>
<feature type="modified residue" description="Phosphoserine" evidence="2">
    <location>
        <position position="27"/>
    </location>
</feature>
<feature type="modified residue" description="Phosphoserine" evidence="2">
    <location>
        <position position="31"/>
    </location>
</feature>
<feature type="modified residue" description="Omega-N-methylarginine" evidence="2">
    <location>
        <position position="32"/>
    </location>
</feature>
<feature type="modified residue" description="Phosphoserine" evidence="2">
    <location>
        <position position="34"/>
    </location>
</feature>
<feature type="modified residue" description="Phosphoserine" evidence="2">
    <location>
        <position position="39"/>
    </location>
</feature>
<feature type="modified residue" description="Omega-N-methylarginine" evidence="2">
    <location>
        <position position="40"/>
    </location>
</feature>
<feature type="modified residue" description="Phosphoserine" evidence="2">
    <location>
        <position position="43"/>
    </location>
</feature>
<feature type="modified residue" description="Phosphoserine" evidence="4">
    <location>
        <position position="44"/>
    </location>
</feature>
<feature type="modified residue" description="Asymmetric dimethylarginine; alternate" evidence="2">
    <location>
        <position position="48"/>
    </location>
</feature>
<feature type="modified residue" description="Omega-N-methylarginine; alternate" evidence="2">
    <location>
        <position position="48"/>
    </location>
</feature>
<feature type="modified residue" description="Phosphoserine; by MAPK" evidence="2">
    <location>
        <position position="81"/>
    </location>
</feature>
<feature type="modified residue" description="N6-malonyllysine" evidence="1">
    <location>
        <position position="108"/>
    </location>
</feature>
<feature type="modified residue" description="N6-acetyllysine" evidence="2">
    <location>
        <position position="214"/>
    </location>
</feature>
<feature type="modified residue" description="Phosphotyrosine" evidence="2">
    <location>
        <position position="235"/>
    </location>
</feature>
<feature type="modified residue" description="Phosphoserine" evidence="2">
    <location>
        <position position="281"/>
    </location>
</feature>
<feature type="modified residue" description="N6-acetyllysine; alternate" evidence="2">
    <location>
        <position position="302"/>
    </location>
</feature>
<feature type="modified residue" description="N6-acetyllysine; alternate" evidence="2">
    <location>
        <position position="332"/>
    </location>
</feature>
<feature type="modified residue" description="Phosphoserine" evidence="2">
    <location>
        <position position="337"/>
    </location>
</feature>
<feature type="modified residue" description="Phosphoserine" evidence="2">
    <location>
        <position position="407"/>
    </location>
</feature>
<feature type="modified residue" description="Phosphoserine" evidence="2">
    <location>
        <position position="411"/>
    </location>
</feature>
<feature type="modified residue" description="Phosphoserine" evidence="2">
    <location>
        <position position="417"/>
    </location>
</feature>
<feature type="modified residue" description="Phosphoserine" evidence="4">
    <location>
        <position position="424"/>
    </location>
</feature>
<feature type="modified residue" description="Phosphoserine" evidence="4">
    <location>
        <position position="433"/>
    </location>
</feature>
<feature type="modified residue" description="Phosphoserine" evidence="2">
    <location>
        <position position="470"/>
    </location>
</feature>
<feature type="modified residue" description="Phosphoserine" evidence="2">
    <location>
        <position position="472"/>
    </location>
</feature>
<feature type="modified residue" description="Phosphoserine" evidence="2">
    <location>
        <position position="473"/>
    </location>
</feature>
<feature type="modified residue" description="Phosphoserine" evidence="3">
    <location>
        <position position="477"/>
    </location>
</feature>
<feature type="cross-link" description="Glycyl lysine isopeptide (Lys-Gly) (interchain with G-Cter in SUMO2)" evidence="2">
    <location>
        <position position="11"/>
    </location>
</feature>
<feature type="cross-link" description="Glycyl lysine isopeptide (Lys-Gly) (interchain with G-Cter in SUMO2)" evidence="2">
    <location>
        <position position="129"/>
    </location>
</feature>
<feature type="cross-link" description="Glycyl lysine isopeptide (Lys-Gly) (interchain with G-Cter in SUMO2)" evidence="2">
    <location>
        <position position="137"/>
    </location>
</feature>
<feature type="cross-link" description="Glycyl lysine isopeptide (Lys-Gly) (interchain with G-Cter in SUMO1); alternate" evidence="2">
    <location>
        <position position="204"/>
    </location>
</feature>
<feature type="cross-link" description="Glycyl lysine isopeptide (Lys-Gly) (interchain with G-Cter in SUMO2); alternate" evidence="2">
    <location>
        <position position="204"/>
    </location>
</feature>
<feature type="cross-link" description="Glycyl lysine isopeptide (Lys-Gly) (interchain with G-Cter in SUMO2)" evidence="2">
    <location>
        <position position="271"/>
    </location>
</feature>
<feature type="cross-link" description="Glycyl lysine isopeptide (Lys-Gly) (interchain with G-Cter in SUMO2)" evidence="2">
    <location>
        <position position="292"/>
    </location>
</feature>
<feature type="cross-link" description="Glycyl lysine isopeptide (Lys-Gly) (interchain with G-Cter in SUMO2); alternate" evidence="2">
    <location>
        <position position="302"/>
    </location>
</feature>
<feature type="cross-link" description="Glycyl lysine isopeptide (Lys-Gly) (interchain with G-Cter in SUMO2)" evidence="2">
    <location>
        <position position="311"/>
    </location>
</feature>
<feature type="cross-link" description="Glycyl lysine isopeptide (Lys-Gly) (interchain with G-Cter in SUMO2); alternate" evidence="2">
    <location>
        <position position="332"/>
    </location>
</feature>
<feature type="cross-link" description="Glycyl lysine isopeptide (Lys-Gly) (interchain with G-Cter in SUMO2)" evidence="2">
    <location>
        <position position="400"/>
    </location>
</feature>
<feature type="cross-link" description="Glycyl lysine isopeptide (Lys-Gly) (interchain with G-Cter in SUMO1); alternate" evidence="2">
    <location>
        <position position="467"/>
    </location>
</feature>
<feature type="cross-link" description="Glycyl lysine isopeptide (Lys-Gly) (interchain with G-Cter in SUMO2); alternate" evidence="2">
    <location>
        <position position="467"/>
    </location>
</feature>
<feature type="sequence conflict" description="In Ref. 2; AAA30598." evidence="8" ref="2">
    <original>E</original>
    <variation>S</variation>
    <location>
        <position position="254"/>
    </location>
</feature>
<feature type="sequence conflict" description="In Ref. 2; AAA30598." evidence="8" ref="2">
    <original>E</original>
    <variation>R</variation>
    <location>
        <position position="362"/>
    </location>
</feature>
<reference key="1">
    <citation type="submission" date="2005-08" db="EMBL/GenBank/DDBJ databases">
        <authorList>
            <consortium name="NIH - Mammalian Gene Collection (MGC) project"/>
        </authorList>
    </citation>
    <scope>NUCLEOTIDE SEQUENCE [LARGE SCALE MRNA]</scope>
    <source>
        <strain>Crossbred X Angus</strain>
        <tissue>Ileum</tissue>
    </source>
</reference>
<reference key="2">
    <citation type="journal article" date="1986" name="Differentiation">
        <title>Cytokeratin expression in simple epithelia. II. cDNA cloning and sequence characteristics of bovine cytokeratin A (no. 8).</title>
        <authorList>
            <person name="Magin T.M."/>
            <person name="Jorcano J.L."/>
            <person name="Franke W.W."/>
        </authorList>
    </citation>
    <scope>NUCLEOTIDE SEQUENCE [MRNA] OF 109-478</scope>
    <scope>TISSUE SPECIFICITY</scope>
    <scope>DEVELOPMENTAL STAGE</scope>
    <source>
        <tissue>Urinary bladder</tissue>
    </source>
</reference>
<name>K2C8_BOVIN</name>
<protein>
    <recommendedName>
        <fullName>Keratin, type II cytoskeletal 8</fullName>
    </recommendedName>
    <alternativeName>
        <fullName>Cytokeratin-8</fullName>
        <shortName>CK-8</shortName>
    </alternativeName>
    <alternativeName>
        <fullName>Cytokeratin-A</fullName>
    </alternativeName>
    <alternativeName>
        <fullName>Keratin-8</fullName>
        <shortName>K8</shortName>
    </alternativeName>
    <alternativeName>
        <fullName>Type-II keratin Kb8</fullName>
    </alternativeName>
</protein>
<dbReference type="EMBL" id="BC103339">
    <property type="protein sequence ID" value="AAI03340.1"/>
    <property type="molecule type" value="mRNA"/>
</dbReference>
<dbReference type="EMBL" id="K03532">
    <property type="protein sequence ID" value="AAA30598.1"/>
    <property type="molecule type" value="mRNA"/>
</dbReference>
<dbReference type="EMBL" id="X12877">
    <property type="protein sequence ID" value="CAA31370.1"/>
    <property type="molecule type" value="mRNA"/>
</dbReference>
<dbReference type="PIR" id="A25004">
    <property type="entry name" value="A25004"/>
</dbReference>
<dbReference type="RefSeq" id="NP_001028782.1">
    <property type="nucleotide sequence ID" value="NM_001033610.1"/>
</dbReference>
<dbReference type="SMR" id="P05786"/>
<dbReference type="FunCoup" id="P05786">
    <property type="interactions" value="685"/>
</dbReference>
<dbReference type="STRING" id="9913.ENSBTAP00000001108"/>
<dbReference type="PaxDb" id="9913-ENSBTAP00000001108"/>
<dbReference type="PeptideAtlas" id="P05786"/>
<dbReference type="GeneID" id="281269"/>
<dbReference type="KEGG" id="bta:281269"/>
<dbReference type="CTD" id="3856"/>
<dbReference type="eggNOG" id="ENOG502QURK">
    <property type="taxonomic scope" value="Eukaryota"/>
</dbReference>
<dbReference type="InParanoid" id="P05786"/>
<dbReference type="OrthoDB" id="2441647at2759"/>
<dbReference type="Proteomes" id="UP000009136">
    <property type="component" value="Unplaced"/>
</dbReference>
<dbReference type="GO" id="GO:0005737">
    <property type="term" value="C:cytoplasm"/>
    <property type="evidence" value="ECO:0000250"/>
    <property type="project" value="UniProtKB"/>
</dbReference>
<dbReference type="GO" id="GO:0045095">
    <property type="term" value="C:keratin filament"/>
    <property type="evidence" value="ECO:0007669"/>
    <property type="project" value="InterPro"/>
</dbReference>
<dbReference type="GO" id="GO:0016363">
    <property type="term" value="C:nuclear matrix"/>
    <property type="evidence" value="ECO:0007669"/>
    <property type="project" value="UniProtKB-SubCell"/>
</dbReference>
<dbReference type="GO" id="GO:0005654">
    <property type="term" value="C:nucleoplasm"/>
    <property type="evidence" value="ECO:0007669"/>
    <property type="project" value="UniProtKB-SubCell"/>
</dbReference>
<dbReference type="FunFam" id="1.20.5.1160:FF:000001">
    <property type="entry name" value="Keratin type II"/>
    <property type="match status" value="1"/>
</dbReference>
<dbReference type="FunFam" id="1.20.5.170:FF:000004">
    <property type="entry name" value="Keratin, type II cytoskeletal 5"/>
    <property type="match status" value="1"/>
</dbReference>
<dbReference type="FunFam" id="1.20.5.500:FF:000001">
    <property type="entry name" value="Type II keratin 23"/>
    <property type="match status" value="1"/>
</dbReference>
<dbReference type="Gene3D" id="1.20.5.170">
    <property type="match status" value="1"/>
</dbReference>
<dbReference type="Gene3D" id="1.20.5.500">
    <property type="entry name" value="Single helix bin"/>
    <property type="match status" value="1"/>
</dbReference>
<dbReference type="Gene3D" id="1.20.5.1160">
    <property type="entry name" value="Vasodilator-stimulated phosphoprotein"/>
    <property type="match status" value="1"/>
</dbReference>
<dbReference type="InterPro" id="IPR018039">
    <property type="entry name" value="IF_conserved"/>
</dbReference>
<dbReference type="InterPro" id="IPR039008">
    <property type="entry name" value="IF_rod_dom"/>
</dbReference>
<dbReference type="InterPro" id="IPR032444">
    <property type="entry name" value="Keratin_2_head"/>
</dbReference>
<dbReference type="InterPro" id="IPR003054">
    <property type="entry name" value="Keratin_II"/>
</dbReference>
<dbReference type="PANTHER" id="PTHR45616">
    <property type="entry name" value="GATA-TYPE DOMAIN-CONTAINING PROTEIN"/>
    <property type="match status" value="1"/>
</dbReference>
<dbReference type="PANTHER" id="PTHR45616:SF26">
    <property type="entry name" value="KERATIN, TYPE II CYTOSKELETAL 8"/>
    <property type="match status" value="1"/>
</dbReference>
<dbReference type="Pfam" id="PF00038">
    <property type="entry name" value="Filament"/>
    <property type="match status" value="1"/>
</dbReference>
<dbReference type="Pfam" id="PF16208">
    <property type="entry name" value="Keratin_2_head"/>
    <property type="match status" value="1"/>
</dbReference>
<dbReference type="PRINTS" id="PR01276">
    <property type="entry name" value="TYPE2KERATIN"/>
</dbReference>
<dbReference type="SMART" id="SM01391">
    <property type="entry name" value="Filament"/>
    <property type="match status" value="1"/>
</dbReference>
<dbReference type="SUPFAM" id="SSF64593">
    <property type="entry name" value="Intermediate filament protein, coiled coil region"/>
    <property type="match status" value="3"/>
</dbReference>
<dbReference type="PROSITE" id="PS00226">
    <property type="entry name" value="IF_ROD_1"/>
    <property type="match status" value="1"/>
</dbReference>
<dbReference type="PROSITE" id="PS51842">
    <property type="entry name" value="IF_ROD_2"/>
    <property type="match status" value="1"/>
</dbReference>
<comment type="function">
    <text evidence="1">Together with KRT19, helps to link the contractile apparatus to dystrophin at the costameres of striated muscle.</text>
</comment>
<comment type="subunit">
    <text evidence="2 3 4">Heterotetramer of two type I and two type II keratins (By similarity). Forms a heterodimer with KRT18 (By similarity). Associates with KRT20 (By similarity). Interacts with PNN (By similarity). When associated with KRT19, interacts with DMD (By similarity). Interacts with TCHP (By similarity). Interacts with APEX1 (By similarity). Interacts with GPER1 (By similarity). Interacts with EPPK1 (By similarity). Interacts with PKP1 and PKP2 (By similarity).</text>
</comment>
<comment type="subcellular location">
    <subcellularLocation>
        <location evidence="4">Cytoplasm</location>
    </subcellularLocation>
    <subcellularLocation>
        <location evidence="4">Nucleus</location>
        <location evidence="4">Nucleoplasm</location>
    </subcellularLocation>
    <subcellularLocation>
        <location evidence="4">Nucleus matrix</location>
    </subcellularLocation>
</comment>
<comment type="tissue specificity">
    <text evidence="7">Expressed in bladder, liver, exocervix and (in very low amounts) esophagus.</text>
</comment>
<comment type="developmental stage">
    <text evidence="7">Expressed in early embryonal epithelia.</text>
</comment>
<comment type="PTM">
    <text evidence="1">O-glycosylated. O-GlcNAcylation at multiple sites increases solubility, and decreases stability by inducing proteasomal degradation (By similarity).</text>
</comment>
<comment type="PTM">
    <text evidence="1">O-glycosylated (O-GlcNAcylated), in a cell cycle-dependent manner.</text>
</comment>
<comment type="miscellaneous">
    <text>There are two types of cytoskeletal and microfibrillar keratin: I (acidic; 40-55 kDa) and II (neutral to basic; 56-70 kDa).</text>
</comment>
<comment type="similarity">
    <text evidence="5">Belongs to the intermediate filament family.</text>
</comment>
<gene>
    <name type="primary">KRT8</name>
</gene>
<keyword id="KW-0007">Acetylation</keyword>
<keyword id="KW-0175">Coiled coil</keyword>
<keyword id="KW-0963">Cytoplasm</keyword>
<keyword id="KW-0325">Glycoprotein</keyword>
<keyword id="KW-0403">Intermediate filament</keyword>
<keyword id="KW-1017">Isopeptide bond</keyword>
<keyword id="KW-0416">Keratin</keyword>
<keyword id="KW-0488">Methylation</keyword>
<keyword id="KW-0539">Nucleus</keyword>
<keyword id="KW-0597">Phosphoprotein</keyword>
<keyword id="KW-1185">Reference proteome</keyword>
<keyword id="KW-0832">Ubl conjugation</keyword>
<proteinExistence type="evidence at transcript level"/>
<accession>P05786</accession>
<accession>Q3SYX7</accession>